<keyword id="KW-0030">Aminoacyl-tRNA synthetase</keyword>
<keyword id="KW-0067">ATP-binding</keyword>
<keyword id="KW-0963">Cytoplasm</keyword>
<keyword id="KW-0436">Ligase</keyword>
<keyword id="KW-0547">Nucleotide-binding</keyword>
<keyword id="KW-0648">Protein biosynthesis</keyword>
<organism>
    <name type="scientific">Brucella suis (strain ATCC 23445 / NCTC 10510)</name>
    <dbReference type="NCBI Taxonomy" id="470137"/>
    <lineage>
        <taxon>Bacteria</taxon>
        <taxon>Pseudomonadati</taxon>
        <taxon>Pseudomonadota</taxon>
        <taxon>Alphaproteobacteria</taxon>
        <taxon>Hyphomicrobiales</taxon>
        <taxon>Brucellaceae</taxon>
        <taxon>Brucella/Ochrobactrum group</taxon>
        <taxon>Brucella</taxon>
    </lineage>
</organism>
<accession>B0CL77</accession>
<protein>
    <recommendedName>
        <fullName evidence="1">Aspartate--tRNA(Asp/Asn) ligase</fullName>
        <ecNumber evidence="1">6.1.1.23</ecNumber>
    </recommendedName>
    <alternativeName>
        <fullName evidence="1">Aspartyl-tRNA synthetase</fullName>
        <shortName evidence="1">AspRS</shortName>
    </alternativeName>
    <alternativeName>
        <fullName evidence="1">Non-discriminating aspartyl-tRNA synthetase</fullName>
        <shortName evidence="1">ND-AspRS</shortName>
    </alternativeName>
</protein>
<dbReference type="EC" id="6.1.1.23" evidence="1"/>
<dbReference type="EMBL" id="CP000911">
    <property type="protein sequence ID" value="ABY37857.1"/>
    <property type="molecule type" value="Genomic_DNA"/>
</dbReference>
<dbReference type="RefSeq" id="WP_004683546.1">
    <property type="nucleotide sequence ID" value="NC_010169.1"/>
</dbReference>
<dbReference type="SMR" id="B0CL77"/>
<dbReference type="GeneID" id="97533935"/>
<dbReference type="KEGG" id="bmt:BSUIS_A0786"/>
<dbReference type="HOGENOM" id="CLU_014330_3_2_5"/>
<dbReference type="Proteomes" id="UP000008545">
    <property type="component" value="Chromosome I"/>
</dbReference>
<dbReference type="GO" id="GO:0005737">
    <property type="term" value="C:cytoplasm"/>
    <property type="evidence" value="ECO:0007669"/>
    <property type="project" value="UniProtKB-SubCell"/>
</dbReference>
<dbReference type="GO" id="GO:0004815">
    <property type="term" value="F:aspartate-tRNA ligase activity"/>
    <property type="evidence" value="ECO:0007669"/>
    <property type="project" value="UniProtKB-UniRule"/>
</dbReference>
<dbReference type="GO" id="GO:0050560">
    <property type="term" value="F:aspartate-tRNA(Asn) ligase activity"/>
    <property type="evidence" value="ECO:0007669"/>
    <property type="project" value="UniProtKB-EC"/>
</dbReference>
<dbReference type="GO" id="GO:0005524">
    <property type="term" value="F:ATP binding"/>
    <property type="evidence" value="ECO:0007669"/>
    <property type="project" value="UniProtKB-UniRule"/>
</dbReference>
<dbReference type="GO" id="GO:0003676">
    <property type="term" value="F:nucleic acid binding"/>
    <property type="evidence" value="ECO:0007669"/>
    <property type="project" value="InterPro"/>
</dbReference>
<dbReference type="GO" id="GO:0006422">
    <property type="term" value="P:aspartyl-tRNA aminoacylation"/>
    <property type="evidence" value="ECO:0007669"/>
    <property type="project" value="UniProtKB-UniRule"/>
</dbReference>
<dbReference type="CDD" id="cd00777">
    <property type="entry name" value="AspRS_core"/>
    <property type="match status" value="1"/>
</dbReference>
<dbReference type="CDD" id="cd04317">
    <property type="entry name" value="EcAspRS_like_N"/>
    <property type="match status" value="1"/>
</dbReference>
<dbReference type="Gene3D" id="3.30.930.10">
    <property type="entry name" value="Bira Bifunctional Protein, Domain 2"/>
    <property type="match status" value="1"/>
</dbReference>
<dbReference type="Gene3D" id="3.30.1360.30">
    <property type="entry name" value="GAD-like domain"/>
    <property type="match status" value="1"/>
</dbReference>
<dbReference type="Gene3D" id="2.40.50.140">
    <property type="entry name" value="Nucleic acid-binding proteins"/>
    <property type="match status" value="1"/>
</dbReference>
<dbReference type="HAMAP" id="MF_00044">
    <property type="entry name" value="Asp_tRNA_synth_type1"/>
    <property type="match status" value="1"/>
</dbReference>
<dbReference type="InterPro" id="IPR004364">
    <property type="entry name" value="Aa-tRNA-synt_II"/>
</dbReference>
<dbReference type="InterPro" id="IPR006195">
    <property type="entry name" value="aa-tRNA-synth_II"/>
</dbReference>
<dbReference type="InterPro" id="IPR045864">
    <property type="entry name" value="aa-tRNA-synth_II/BPL/LPL"/>
</dbReference>
<dbReference type="InterPro" id="IPR004524">
    <property type="entry name" value="Asp-tRNA-ligase_1"/>
</dbReference>
<dbReference type="InterPro" id="IPR047089">
    <property type="entry name" value="Asp-tRNA-ligase_1_N"/>
</dbReference>
<dbReference type="InterPro" id="IPR002312">
    <property type="entry name" value="Asp/Asn-tRNA-synth_IIb"/>
</dbReference>
<dbReference type="InterPro" id="IPR047090">
    <property type="entry name" value="AspRS_core"/>
</dbReference>
<dbReference type="InterPro" id="IPR004115">
    <property type="entry name" value="GAD-like_sf"/>
</dbReference>
<dbReference type="InterPro" id="IPR029351">
    <property type="entry name" value="GAD_dom"/>
</dbReference>
<dbReference type="InterPro" id="IPR012340">
    <property type="entry name" value="NA-bd_OB-fold"/>
</dbReference>
<dbReference type="InterPro" id="IPR004365">
    <property type="entry name" value="NA-bd_OB_tRNA"/>
</dbReference>
<dbReference type="NCBIfam" id="TIGR00459">
    <property type="entry name" value="aspS_bact"/>
    <property type="match status" value="1"/>
</dbReference>
<dbReference type="NCBIfam" id="NF001750">
    <property type="entry name" value="PRK00476.1"/>
    <property type="match status" value="1"/>
</dbReference>
<dbReference type="PANTHER" id="PTHR22594:SF5">
    <property type="entry name" value="ASPARTATE--TRNA LIGASE, MITOCHONDRIAL"/>
    <property type="match status" value="1"/>
</dbReference>
<dbReference type="PANTHER" id="PTHR22594">
    <property type="entry name" value="ASPARTYL/LYSYL-TRNA SYNTHETASE"/>
    <property type="match status" value="1"/>
</dbReference>
<dbReference type="Pfam" id="PF02938">
    <property type="entry name" value="GAD"/>
    <property type="match status" value="1"/>
</dbReference>
<dbReference type="Pfam" id="PF00152">
    <property type="entry name" value="tRNA-synt_2"/>
    <property type="match status" value="1"/>
</dbReference>
<dbReference type="Pfam" id="PF01336">
    <property type="entry name" value="tRNA_anti-codon"/>
    <property type="match status" value="1"/>
</dbReference>
<dbReference type="PRINTS" id="PR01042">
    <property type="entry name" value="TRNASYNTHASP"/>
</dbReference>
<dbReference type="SUPFAM" id="SSF55681">
    <property type="entry name" value="Class II aaRS and biotin synthetases"/>
    <property type="match status" value="1"/>
</dbReference>
<dbReference type="SUPFAM" id="SSF55261">
    <property type="entry name" value="GAD domain-like"/>
    <property type="match status" value="1"/>
</dbReference>
<dbReference type="SUPFAM" id="SSF50249">
    <property type="entry name" value="Nucleic acid-binding proteins"/>
    <property type="match status" value="1"/>
</dbReference>
<dbReference type="PROSITE" id="PS50862">
    <property type="entry name" value="AA_TRNA_LIGASE_II"/>
    <property type="match status" value="1"/>
</dbReference>
<comment type="function">
    <text evidence="1">Aspartyl-tRNA synthetase with relaxed tRNA specificity since it is able to aspartylate not only its cognate tRNA(Asp) but also tRNA(Asn). Reaction proceeds in two steps: L-aspartate is first activated by ATP to form Asp-AMP and then transferred to the acceptor end of tRNA(Asp/Asn).</text>
</comment>
<comment type="catalytic activity">
    <reaction evidence="1">
        <text>tRNA(Asx) + L-aspartate + ATP = L-aspartyl-tRNA(Asx) + AMP + diphosphate</text>
        <dbReference type="Rhea" id="RHEA:18349"/>
        <dbReference type="Rhea" id="RHEA-COMP:9710"/>
        <dbReference type="Rhea" id="RHEA-COMP:9711"/>
        <dbReference type="ChEBI" id="CHEBI:29991"/>
        <dbReference type="ChEBI" id="CHEBI:30616"/>
        <dbReference type="ChEBI" id="CHEBI:33019"/>
        <dbReference type="ChEBI" id="CHEBI:78442"/>
        <dbReference type="ChEBI" id="CHEBI:78516"/>
        <dbReference type="ChEBI" id="CHEBI:456215"/>
        <dbReference type="EC" id="6.1.1.23"/>
    </reaction>
</comment>
<comment type="subunit">
    <text evidence="1">Homodimer.</text>
</comment>
<comment type="subcellular location">
    <subcellularLocation>
        <location evidence="1">Cytoplasm</location>
    </subcellularLocation>
</comment>
<comment type="similarity">
    <text evidence="1">Belongs to the class-II aminoacyl-tRNA synthetase family. Type 1 subfamily.</text>
</comment>
<evidence type="ECO:0000255" key="1">
    <source>
        <dbReference type="HAMAP-Rule" id="MF_00044"/>
    </source>
</evidence>
<gene>
    <name evidence="1" type="primary">aspS</name>
    <name type="ordered locus">BSUIS_A0786</name>
</gene>
<reference key="1">
    <citation type="submission" date="2007-12" db="EMBL/GenBank/DDBJ databases">
        <title>Brucella suis ATCC 23445 whole genome shotgun sequencing project.</title>
        <authorList>
            <person name="Setubal J.C."/>
            <person name="Bowns C."/>
            <person name="Boyle S."/>
            <person name="Crasta O.R."/>
            <person name="Czar M.J."/>
            <person name="Dharmanolla C."/>
            <person name="Gillespie J.J."/>
            <person name="Kenyon R.W."/>
            <person name="Lu J."/>
            <person name="Mane S."/>
            <person name="Mohapatra S."/>
            <person name="Nagrani S."/>
            <person name="Purkayastha A."/>
            <person name="Rajasimha H.K."/>
            <person name="Shallom J.M."/>
            <person name="Shallom S."/>
            <person name="Shukla M."/>
            <person name="Snyder E.E."/>
            <person name="Sobral B.W."/>
            <person name="Wattam A.R."/>
            <person name="Will R."/>
            <person name="Williams K."/>
            <person name="Yoo H."/>
            <person name="Bruce D."/>
            <person name="Detter C."/>
            <person name="Munk C."/>
            <person name="Brettin T.S."/>
        </authorList>
    </citation>
    <scope>NUCLEOTIDE SEQUENCE [LARGE SCALE GENOMIC DNA]</scope>
    <source>
        <strain>ATCC 23445 / NCTC 10510</strain>
    </source>
</reference>
<proteinExistence type="inferred from homology"/>
<feature type="chain" id="PRO_1000074693" description="Aspartate--tRNA(Asp/Asn) ligase">
    <location>
        <begin position="1"/>
        <end position="595"/>
    </location>
</feature>
<feature type="region of interest" description="Aspartate" evidence="1">
    <location>
        <begin position="199"/>
        <end position="202"/>
    </location>
</feature>
<feature type="binding site" evidence="1">
    <location>
        <position position="175"/>
    </location>
    <ligand>
        <name>L-aspartate</name>
        <dbReference type="ChEBI" id="CHEBI:29991"/>
    </ligand>
</feature>
<feature type="binding site" evidence="1">
    <location>
        <begin position="221"/>
        <end position="223"/>
    </location>
    <ligand>
        <name>ATP</name>
        <dbReference type="ChEBI" id="CHEBI:30616"/>
    </ligand>
</feature>
<feature type="binding site" evidence="1">
    <location>
        <position position="221"/>
    </location>
    <ligand>
        <name>L-aspartate</name>
        <dbReference type="ChEBI" id="CHEBI:29991"/>
    </ligand>
</feature>
<feature type="binding site" evidence="1">
    <location>
        <position position="454"/>
    </location>
    <ligand>
        <name>L-aspartate</name>
        <dbReference type="ChEBI" id="CHEBI:29991"/>
    </ligand>
</feature>
<feature type="binding site" evidence="1">
    <location>
        <position position="488"/>
    </location>
    <ligand>
        <name>ATP</name>
        <dbReference type="ChEBI" id="CHEBI:30616"/>
    </ligand>
</feature>
<feature type="binding site" evidence="1">
    <location>
        <position position="495"/>
    </location>
    <ligand>
        <name>L-aspartate</name>
        <dbReference type="ChEBI" id="CHEBI:29991"/>
    </ligand>
</feature>
<feature type="binding site" evidence="1">
    <location>
        <begin position="540"/>
        <end position="543"/>
    </location>
    <ligand>
        <name>ATP</name>
        <dbReference type="ChEBI" id="CHEBI:30616"/>
    </ligand>
</feature>
<feature type="site" description="Important for tRNA non-discrimination" evidence="1">
    <location>
        <position position="33"/>
    </location>
</feature>
<sequence>MHRYRSHTCAALRKTDVGSNVRLSGWVHRVRDHGGILFIDLRDHYGITQIVADPDSPAFKVAETVRGEWVIRVDGEVKARADDAVNTNLPTGEVEIFATEIEVLSPAKELPLPVFGEPDYPEDIRLKYRFLDLRRETLHKNIMSRTKIIAAMRRRMTEIGFNEFSTPILTASSPEGARDFLVPSRIHPGKFYALPQAPQQYKQLLMVAGFDRYFQIAPCFRDEDPRADRLPGEFYQLDLEMSFVTQEEVWETMEPVMRGIFEEFAEGKPVTKVFRRIAYDDAIRTYGSDKPDLRNPIEMQAVTDHFAGSGFKVFANMIANDAKVEVWAIPAKTGGSRAFCDRMNSWAQSEGQPGLGYIFWRKEGDKLEGAGPIAKNIGEERTEAIRKQMGLEDGDACFFVAGLPSKFYKFAGDARTRAGEELNLVDRDRFELAWIIDFPFYEWDEDNKKIDFAHNPFSMPQGGMDALENMDPLEIKAYQYDLVCNGFEIASGSIRNQLPEVMVKAFEKVGLSQQDVEERFGGLYRAFQYGAPPHGGMAAGIDRVIMLLVGAKNLREISLFPMNQQALDLLMGAPSEVSPAQLRDLHVRLAPVQKS</sequence>
<name>SYDND_BRUSI</name>